<gene>
    <name evidence="1" type="primary">hutU</name>
    <name type="ordered locus">Haur_0629</name>
</gene>
<proteinExistence type="inferred from homology"/>
<name>HUTU_HERA2</name>
<feature type="chain" id="PRO_1000129564" description="Urocanate hydratase">
    <location>
        <begin position="1"/>
        <end position="552"/>
    </location>
</feature>
<feature type="active site" evidence="1">
    <location>
        <position position="406"/>
    </location>
</feature>
<feature type="binding site" evidence="1">
    <location>
        <begin position="48"/>
        <end position="49"/>
    </location>
    <ligand>
        <name>NAD(+)</name>
        <dbReference type="ChEBI" id="CHEBI:57540"/>
    </ligand>
</feature>
<feature type="binding site" evidence="1">
    <location>
        <position position="126"/>
    </location>
    <ligand>
        <name>NAD(+)</name>
        <dbReference type="ChEBI" id="CHEBI:57540"/>
    </ligand>
</feature>
<feature type="binding site" evidence="1">
    <location>
        <begin position="172"/>
        <end position="174"/>
    </location>
    <ligand>
        <name>NAD(+)</name>
        <dbReference type="ChEBI" id="CHEBI:57540"/>
    </ligand>
</feature>
<feature type="binding site" evidence="1">
    <location>
        <position position="192"/>
    </location>
    <ligand>
        <name>NAD(+)</name>
        <dbReference type="ChEBI" id="CHEBI:57540"/>
    </ligand>
</feature>
<feature type="binding site" evidence="1">
    <location>
        <position position="197"/>
    </location>
    <ligand>
        <name>NAD(+)</name>
        <dbReference type="ChEBI" id="CHEBI:57540"/>
    </ligand>
</feature>
<feature type="binding site" evidence="1">
    <location>
        <begin position="238"/>
        <end position="239"/>
    </location>
    <ligand>
        <name>NAD(+)</name>
        <dbReference type="ChEBI" id="CHEBI:57540"/>
    </ligand>
</feature>
<feature type="binding site" evidence="1">
    <location>
        <begin position="259"/>
        <end position="263"/>
    </location>
    <ligand>
        <name>NAD(+)</name>
        <dbReference type="ChEBI" id="CHEBI:57540"/>
    </ligand>
</feature>
<feature type="binding site" evidence="1">
    <location>
        <begin position="269"/>
        <end position="270"/>
    </location>
    <ligand>
        <name>NAD(+)</name>
        <dbReference type="ChEBI" id="CHEBI:57540"/>
    </ligand>
</feature>
<feature type="binding site" evidence="1">
    <location>
        <position position="318"/>
    </location>
    <ligand>
        <name>NAD(+)</name>
        <dbReference type="ChEBI" id="CHEBI:57540"/>
    </ligand>
</feature>
<feature type="binding site" evidence="1">
    <location>
        <position position="488"/>
    </location>
    <ligand>
        <name>NAD(+)</name>
        <dbReference type="ChEBI" id="CHEBI:57540"/>
    </ligand>
</feature>
<sequence>MTSSRIVRAPRGSELSCKGWAQEAALRMLMNNLDPDVAEDPQNLIVYGGTGKAARNWQCFDAIVRSLQELNDDETLLVQSGKPVAVFRSHRDAPRVLIANSMLVPHWATWENFRELEQAGLTMYGQMTAGSWIYIGTQGILQGTYETLAAIARQHFGGSLRGRWTLTAGLGGMGGAQPLAVTMNDGVALVVEVDRQRMQRRLDTRYLDVAVDTLEEAMTLVDEAVRDGKALSVGLLGNAAEVFGELYKRGVRPDIVTDQTSAHDPLEGYVPAGMSLEQALELRQRDPEEYVKHSTASMVEHVKAMVAFADAGSIVFDYGNNLRGVAKAAGYDRAFAYPGFVPAYIRPLFCEGKGPFRWAALSGDPADIAKTDEALLELFPEDQALHRWIRAAQERVQFQGLPARICWLGYGERAKAGALFNKLVRDGVVSAPIVIGRDHLDCGSVASPNRETEAMRDGSDAIGDWPILNAMINAVNGATWVSVHHGGGVGIGYSLHAGMVIVADGTAEADHRLERVLTSDPGMGVVRHVDAGYDEAIAVAQERNVHIPMLKQ</sequence>
<evidence type="ECO:0000255" key="1">
    <source>
        <dbReference type="HAMAP-Rule" id="MF_00577"/>
    </source>
</evidence>
<accession>A9AW39</accession>
<comment type="function">
    <text evidence="1">Catalyzes the conversion of urocanate to 4-imidazolone-5-propionate.</text>
</comment>
<comment type="catalytic activity">
    <reaction evidence="1">
        <text>4-imidazolone-5-propanoate = trans-urocanate + H2O</text>
        <dbReference type="Rhea" id="RHEA:13101"/>
        <dbReference type="ChEBI" id="CHEBI:15377"/>
        <dbReference type="ChEBI" id="CHEBI:17771"/>
        <dbReference type="ChEBI" id="CHEBI:77893"/>
        <dbReference type="EC" id="4.2.1.49"/>
    </reaction>
</comment>
<comment type="cofactor">
    <cofactor evidence="1">
        <name>NAD(+)</name>
        <dbReference type="ChEBI" id="CHEBI:57540"/>
    </cofactor>
    <text evidence="1">Binds 1 NAD(+) per subunit.</text>
</comment>
<comment type="pathway">
    <text evidence="1">Amino-acid degradation; L-histidine degradation into L-glutamate; N-formimidoyl-L-glutamate from L-histidine: step 2/3.</text>
</comment>
<comment type="subcellular location">
    <subcellularLocation>
        <location evidence="1">Cytoplasm</location>
    </subcellularLocation>
</comment>
<comment type="similarity">
    <text evidence="1">Belongs to the urocanase family.</text>
</comment>
<dbReference type="EC" id="4.2.1.49" evidence="1"/>
<dbReference type="EMBL" id="CP000875">
    <property type="protein sequence ID" value="ABX03277.1"/>
    <property type="molecule type" value="Genomic_DNA"/>
</dbReference>
<dbReference type="SMR" id="A9AW39"/>
<dbReference type="FunCoup" id="A9AW39">
    <property type="interactions" value="65"/>
</dbReference>
<dbReference type="STRING" id="316274.Haur_0629"/>
<dbReference type="KEGG" id="hau:Haur_0629"/>
<dbReference type="eggNOG" id="COG2987">
    <property type="taxonomic scope" value="Bacteria"/>
</dbReference>
<dbReference type="HOGENOM" id="CLU_018868_0_1_0"/>
<dbReference type="InParanoid" id="A9AW39"/>
<dbReference type="UniPathway" id="UPA00379">
    <property type="reaction ID" value="UER00550"/>
</dbReference>
<dbReference type="Proteomes" id="UP000000787">
    <property type="component" value="Chromosome"/>
</dbReference>
<dbReference type="GO" id="GO:0005737">
    <property type="term" value="C:cytoplasm"/>
    <property type="evidence" value="ECO:0007669"/>
    <property type="project" value="UniProtKB-SubCell"/>
</dbReference>
<dbReference type="GO" id="GO:0016153">
    <property type="term" value="F:urocanate hydratase activity"/>
    <property type="evidence" value="ECO:0007669"/>
    <property type="project" value="UniProtKB-UniRule"/>
</dbReference>
<dbReference type="GO" id="GO:0019556">
    <property type="term" value="P:L-histidine catabolic process to glutamate and formamide"/>
    <property type="evidence" value="ECO:0007669"/>
    <property type="project" value="UniProtKB-UniPathway"/>
</dbReference>
<dbReference type="GO" id="GO:0019557">
    <property type="term" value="P:L-histidine catabolic process to glutamate and formate"/>
    <property type="evidence" value="ECO:0007669"/>
    <property type="project" value="UniProtKB-UniPathway"/>
</dbReference>
<dbReference type="FunFam" id="3.40.50.10730:FF:000001">
    <property type="entry name" value="Urocanate hydratase"/>
    <property type="match status" value="1"/>
</dbReference>
<dbReference type="Gene3D" id="3.40.50.10730">
    <property type="entry name" value="Urocanase like domains"/>
    <property type="match status" value="1"/>
</dbReference>
<dbReference type="Gene3D" id="3.40.1770.10">
    <property type="entry name" value="Urocanase superfamily"/>
    <property type="match status" value="1"/>
</dbReference>
<dbReference type="HAMAP" id="MF_00577">
    <property type="entry name" value="HutU"/>
    <property type="match status" value="1"/>
</dbReference>
<dbReference type="InterPro" id="IPR055351">
    <property type="entry name" value="Urocanase"/>
</dbReference>
<dbReference type="InterPro" id="IPR023637">
    <property type="entry name" value="Urocanase-like"/>
</dbReference>
<dbReference type="InterPro" id="IPR035401">
    <property type="entry name" value="Urocanase_C"/>
</dbReference>
<dbReference type="InterPro" id="IPR038364">
    <property type="entry name" value="Urocanase_central_sf"/>
</dbReference>
<dbReference type="InterPro" id="IPR023636">
    <property type="entry name" value="Urocanase_CS"/>
</dbReference>
<dbReference type="InterPro" id="IPR035400">
    <property type="entry name" value="Urocanase_N"/>
</dbReference>
<dbReference type="InterPro" id="IPR035085">
    <property type="entry name" value="Urocanase_Rossmann-like"/>
</dbReference>
<dbReference type="InterPro" id="IPR036190">
    <property type="entry name" value="Urocanase_sf"/>
</dbReference>
<dbReference type="NCBIfam" id="TIGR01228">
    <property type="entry name" value="hutU"/>
    <property type="match status" value="1"/>
</dbReference>
<dbReference type="NCBIfam" id="NF003820">
    <property type="entry name" value="PRK05414.1"/>
    <property type="match status" value="1"/>
</dbReference>
<dbReference type="PANTHER" id="PTHR12216">
    <property type="entry name" value="UROCANATE HYDRATASE"/>
    <property type="match status" value="1"/>
</dbReference>
<dbReference type="PANTHER" id="PTHR12216:SF4">
    <property type="entry name" value="UROCANATE HYDRATASE"/>
    <property type="match status" value="1"/>
</dbReference>
<dbReference type="Pfam" id="PF01175">
    <property type="entry name" value="Urocanase"/>
    <property type="match status" value="1"/>
</dbReference>
<dbReference type="Pfam" id="PF17392">
    <property type="entry name" value="Urocanase_C"/>
    <property type="match status" value="1"/>
</dbReference>
<dbReference type="Pfam" id="PF17391">
    <property type="entry name" value="Urocanase_N"/>
    <property type="match status" value="1"/>
</dbReference>
<dbReference type="PIRSF" id="PIRSF001423">
    <property type="entry name" value="Urocanate_hydrat"/>
    <property type="match status" value="1"/>
</dbReference>
<dbReference type="SUPFAM" id="SSF111326">
    <property type="entry name" value="Urocanase"/>
    <property type="match status" value="1"/>
</dbReference>
<dbReference type="PROSITE" id="PS01233">
    <property type="entry name" value="UROCANASE"/>
    <property type="match status" value="1"/>
</dbReference>
<organism>
    <name type="scientific">Herpetosiphon aurantiacus (strain ATCC 23779 / DSM 785 / 114-95)</name>
    <dbReference type="NCBI Taxonomy" id="316274"/>
    <lineage>
        <taxon>Bacteria</taxon>
        <taxon>Bacillati</taxon>
        <taxon>Chloroflexota</taxon>
        <taxon>Chloroflexia</taxon>
        <taxon>Herpetosiphonales</taxon>
        <taxon>Herpetosiphonaceae</taxon>
        <taxon>Herpetosiphon</taxon>
    </lineage>
</organism>
<keyword id="KW-0963">Cytoplasm</keyword>
<keyword id="KW-0369">Histidine metabolism</keyword>
<keyword id="KW-0456">Lyase</keyword>
<keyword id="KW-0520">NAD</keyword>
<protein>
    <recommendedName>
        <fullName evidence="1">Urocanate hydratase</fullName>
        <shortName evidence="1">Urocanase</shortName>
        <ecNumber evidence="1">4.2.1.49</ecNumber>
    </recommendedName>
    <alternativeName>
        <fullName evidence="1">Imidazolonepropionate hydrolase</fullName>
    </alternativeName>
</protein>
<reference key="1">
    <citation type="journal article" date="2011" name="Stand. Genomic Sci.">
        <title>Complete genome sequence of the filamentous gliding predatory bacterium Herpetosiphon aurantiacus type strain (114-95(T)).</title>
        <authorList>
            <person name="Kiss H."/>
            <person name="Nett M."/>
            <person name="Domin N."/>
            <person name="Martin K."/>
            <person name="Maresca J.A."/>
            <person name="Copeland A."/>
            <person name="Lapidus A."/>
            <person name="Lucas S."/>
            <person name="Berry K.W."/>
            <person name="Glavina Del Rio T."/>
            <person name="Dalin E."/>
            <person name="Tice H."/>
            <person name="Pitluck S."/>
            <person name="Richardson P."/>
            <person name="Bruce D."/>
            <person name="Goodwin L."/>
            <person name="Han C."/>
            <person name="Detter J.C."/>
            <person name="Schmutz J."/>
            <person name="Brettin T."/>
            <person name="Land M."/>
            <person name="Hauser L."/>
            <person name="Kyrpides N.C."/>
            <person name="Ivanova N."/>
            <person name="Goeker M."/>
            <person name="Woyke T."/>
            <person name="Klenk H.P."/>
            <person name="Bryant D.A."/>
        </authorList>
    </citation>
    <scope>NUCLEOTIDE SEQUENCE [LARGE SCALE GENOMIC DNA]</scope>
    <source>
        <strain>ATCC 23779 / DSM 785 / 114-95</strain>
    </source>
</reference>